<evidence type="ECO:0000250" key="1"/>
<evidence type="ECO:0000250" key="2">
    <source>
        <dbReference type="UniProtKB" id="Q9BRK4"/>
    </source>
</evidence>
<evidence type="ECO:0000255" key="3">
    <source>
        <dbReference type="HAMAP-Rule" id="MF_03026"/>
    </source>
</evidence>
<evidence type="ECO:0000256" key="4">
    <source>
        <dbReference type="SAM" id="MobiDB-lite"/>
    </source>
</evidence>
<evidence type="ECO:0000269" key="5">
    <source>
    </source>
</evidence>
<evidence type="ECO:0000305" key="6"/>
<evidence type="ECO:0007744" key="7">
    <source>
    </source>
</evidence>
<proteinExistence type="evidence at protein level"/>
<sequence length="671" mass="72578">MAIVHTLPVPLEPARETATAPKTPAMGSVSSLISGRPCPGGPAPQRHHGVPGPTFFRQQDGLLPGGYEAQEPLCPAVPPRKAVPGNSFTYVNEDFRTESPPSPSSDVEDPREHQAHNAHLRGPPPKLIPVSGKLEKNMEKILIRPTAFKPVLPKPRGAPSLPGFLGPRAAGLSGSQGSLTQLFGGPASSSSSSSSSSAADKPLALSGWASGCPSGTLSDSGRNSLSSLPTYSTGGAEPTTNSPGGHLPSHGPGRGALPGPARGVPTGPSHSDSGRSSSSKSTGSLGGRVAGGLLGSGARASPGSSSGGDRSPPPPPPPPPSDEALLHCVLEGKLRDREAELQQLRDSMDESEATVCQAFGARQRRWPRERGEDCAAQAQQATQRVQRAQQLLQLQVFQLQQEKRQLQDDFAQLLQEREQLERRCATFEREQRELGPRLEETKWEVCQKSGEISLLKQQLKESQAELVQKGSELVALRVALREARATLRVSEGRARGLQEAARAREQELEACSQELQRYRQEAERLREKAGHLDAEASGLRDPPVPPATTDPFLLAESDEAKVQRAAAGAGGSLRAQVERLRQELQREQRRGDEQRDSFEGERLAWQAEKEQVIRYQKQLQHNYIQMYRRNRQLEQELQQLSLELEARELADLGLAESAPCICLEEITATEI</sequence>
<dbReference type="EMBL" id="AK129446">
    <property type="protein sequence ID" value="BAC98256.1"/>
    <property type="status" value="ALT_INIT"/>
    <property type="molecule type" value="mRNA"/>
</dbReference>
<dbReference type="EMBL" id="AC132957">
    <property type="status" value="NOT_ANNOTATED_CDS"/>
    <property type="molecule type" value="Genomic_DNA"/>
</dbReference>
<dbReference type="EMBL" id="BC014695">
    <property type="protein sequence ID" value="AAH14695.1"/>
    <property type="molecule type" value="mRNA"/>
</dbReference>
<dbReference type="EMBL" id="BC092263">
    <property type="protein sequence ID" value="AAH92263.1"/>
    <property type="molecule type" value="mRNA"/>
</dbReference>
<dbReference type="CCDS" id="CCDS29855.1"/>
<dbReference type="RefSeq" id="NP_001123997.1">
    <property type="nucleotide sequence ID" value="NM_001130525.1"/>
</dbReference>
<dbReference type="RefSeq" id="NP_001123998.1">
    <property type="nucleotide sequence ID" value="NM_001130526.1"/>
</dbReference>
<dbReference type="RefSeq" id="NP_663478.2">
    <property type="nucleotide sequence ID" value="NM_145503.2"/>
</dbReference>
<dbReference type="RefSeq" id="XP_006527067.1">
    <property type="nucleotide sequence ID" value="XM_006527004.4"/>
</dbReference>
<dbReference type="RefSeq" id="XP_030106758.1">
    <property type="nucleotide sequence ID" value="XM_030250898.2"/>
</dbReference>
<dbReference type="RefSeq" id="XP_030106759.1">
    <property type="nucleotide sequence ID" value="XM_030250899.2"/>
</dbReference>
<dbReference type="SMR" id="Q91YU6"/>
<dbReference type="BioGRID" id="230483">
    <property type="interactions" value="4"/>
</dbReference>
<dbReference type="FunCoup" id="Q91YU6">
    <property type="interactions" value="643"/>
</dbReference>
<dbReference type="IntAct" id="Q91YU6">
    <property type="interactions" value="5"/>
</dbReference>
<dbReference type="STRING" id="10090.ENSMUSP00000045478"/>
<dbReference type="iPTMnet" id="Q91YU6"/>
<dbReference type="PhosphoSitePlus" id="Q91YU6"/>
<dbReference type="PaxDb" id="10090-ENSMUSP00000045478"/>
<dbReference type="PeptideAtlas" id="Q91YU6"/>
<dbReference type="ProteomicsDB" id="292159"/>
<dbReference type="Pumba" id="Q91YU6"/>
<dbReference type="Antibodypedia" id="31240">
    <property type="antibodies" value="151 antibodies from 27 providers"/>
</dbReference>
<dbReference type="DNASU" id="226154"/>
<dbReference type="Ensembl" id="ENSMUST00000039016.14">
    <property type="protein sequence ID" value="ENSMUSP00000045478.7"/>
    <property type="gene ID" value="ENSMUSG00000035342.15"/>
</dbReference>
<dbReference type="Ensembl" id="ENSMUST00000178087.3">
    <property type="protein sequence ID" value="ENSMUSP00000136405.2"/>
    <property type="gene ID" value="ENSMUSG00000035342.15"/>
</dbReference>
<dbReference type="Ensembl" id="ENSMUST00000179108.9">
    <property type="protein sequence ID" value="ENSMUSP00000137571.2"/>
    <property type="gene ID" value="ENSMUSG00000035342.15"/>
</dbReference>
<dbReference type="GeneID" id="226154"/>
<dbReference type="KEGG" id="mmu:226154"/>
<dbReference type="UCSC" id="uc008hql.2">
    <property type="organism name" value="mouse"/>
</dbReference>
<dbReference type="AGR" id="MGI:2385095"/>
<dbReference type="CTD" id="84445"/>
<dbReference type="MGI" id="MGI:2385095">
    <property type="gene designation" value="Lzts2"/>
</dbReference>
<dbReference type="VEuPathDB" id="HostDB:ENSMUSG00000035342"/>
<dbReference type="eggNOG" id="ENOG502QWFS">
    <property type="taxonomic scope" value="Eukaryota"/>
</dbReference>
<dbReference type="GeneTree" id="ENSGT00940000154078"/>
<dbReference type="HOGENOM" id="CLU_026379_2_0_1"/>
<dbReference type="InParanoid" id="Q91YU6"/>
<dbReference type="OMA" id="LQHNYVQ"/>
<dbReference type="OrthoDB" id="10030037at2759"/>
<dbReference type="PhylomeDB" id="Q91YU6"/>
<dbReference type="TreeFam" id="TF331420"/>
<dbReference type="BioGRID-ORCS" id="226154">
    <property type="hits" value="3 hits in 76 CRISPR screens"/>
</dbReference>
<dbReference type="CD-CODE" id="CE726F99">
    <property type="entry name" value="Postsynaptic density"/>
</dbReference>
<dbReference type="ChiTaRS" id="Lzts2">
    <property type="organism name" value="mouse"/>
</dbReference>
<dbReference type="PRO" id="PR:Q91YU6"/>
<dbReference type="Proteomes" id="UP000000589">
    <property type="component" value="Chromosome 19"/>
</dbReference>
<dbReference type="RNAct" id="Q91YU6">
    <property type="molecule type" value="protein"/>
</dbReference>
<dbReference type="Bgee" id="ENSMUSG00000035342">
    <property type="expression patterns" value="Expressed in lip and 248 other cell types or tissues"/>
</dbReference>
<dbReference type="ExpressionAtlas" id="Q91YU6">
    <property type="expression patterns" value="baseline and differential"/>
</dbReference>
<dbReference type="GO" id="GO:0005813">
    <property type="term" value="C:centrosome"/>
    <property type="evidence" value="ECO:0007669"/>
    <property type="project" value="UniProtKB-SubCell"/>
</dbReference>
<dbReference type="GO" id="GO:0005737">
    <property type="term" value="C:cytoplasm"/>
    <property type="evidence" value="ECO:0000314"/>
    <property type="project" value="MGI"/>
</dbReference>
<dbReference type="GO" id="GO:0005829">
    <property type="term" value="C:cytosol"/>
    <property type="evidence" value="ECO:0007669"/>
    <property type="project" value="Ensembl"/>
</dbReference>
<dbReference type="GO" id="GO:0005874">
    <property type="term" value="C:microtubule"/>
    <property type="evidence" value="ECO:0007669"/>
    <property type="project" value="UniProtKB-KW"/>
</dbReference>
<dbReference type="GO" id="GO:0030496">
    <property type="term" value="C:midbody"/>
    <property type="evidence" value="ECO:0007669"/>
    <property type="project" value="UniProtKB-UniRule"/>
</dbReference>
<dbReference type="GO" id="GO:0005886">
    <property type="term" value="C:plasma membrane"/>
    <property type="evidence" value="ECO:0007669"/>
    <property type="project" value="Ensembl"/>
</dbReference>
<dbReference type="GO" id="GO:0031982">
    <property type="term" value="C:vesicle"/>
    <property type="evidence" value="ECO:0007669"/>
    <property type="project" value="Ensembl"/>
</dbReference>
<dbReference type="GO" id="GO:0048144">
    <property type="term" value="P:fibroblast proliferation"/>
    <property type="evidence" value="ECO:0000315"/>
    <property type="project" value="MGI"/>
</dbReference>
<dbReference type="GO" id="GO:0001822">
    <property type="term" value="P:kidney development"/>
    <property type="evidence" value="ECO:0000315"/>
    <property type="project" value="MGI"/>
</dbReference>
<dbReference type="GO" id="GO:0051013">
    <property type="term" value="P:microtubule severing"/>
    <property type="evidence" value="ECO:0007669"/>
    <property type="project" value="UniProtKB-UniRule"/>
</dbReference>
<dbReference type="GO" id="GO:0000281">
    <property type="term" value="P:mitotic cytokinesis"/>
    <property type="evidence" value="ECO:0007669"/>
    <property type="project" value="UniProtKB-UniRule"/>
</dbReference>
<dbReference type="GO" id="GO:0090090">
    <property type="term" value="P:negative regulation of canonical Wnt signaling pathway"/>
    <property type="evidence" value="ECO:0000316"/>
    <property type="project" value="MGI"/>
</dbReference>
<dbReference type="GO" id="GO:0048147">
    <property type="term" value="P:negative regulation of fibroblast proliferation"/>
    <property type="evidence" value="ECO:0000315"/>
    <property type="project" value="MGI"/>
</dbReference>
<dbReference type="GO" id="GO:1900181">
    <property type="term" value="P:negative regulation of protein localization to nucleus"/>
    <property type="evidence" value="ECO:0000315"/>
    <property type="project" value="MGI"/>
</dbReference>
<dbReference type="GO" id="GO:0030178">
    <property type="term" value="P:negative regulation of Wnt signaling pathway"/>
    <property type="evidence" value="ECO:0000315"/>
    <property type="project" value="MGI"/>
</dbReference>
<dbReference type="GO" id="GO:0051168">
    <property type="term" value="P:nuclear export"/>
    <property type="evidence" value="ECO:0007669"/>
    <property type="project" value="UniProtKB-UniRule"/>
</dbReference>
<dbReference type="GO" id="GO:0060682">
    <property type="term" value="P:primary ureteric bud growth"/>
    <property type="evidence" value="ECO:0000315"/>
    <property type="project" value="MGI"/>
</dbReference>
<dbReference type="GO" id="GO:0051255">
    <property type="term" value="P:spindle midzone assembly"/>
    <property type="evidence" value="ECO:0007669"/>
    <property type="project" value="UniProtKB-UniRule"/>
</dbReference>
<dbReference type="GO" id="GO:0072197">
    <property type="term" value="P:ureter morphogenesis"/>
    <property type="evidence" value="ECO:0000315"/>
    <property type="project" value="MGI"/>
</dbReference>
<dbReference type="GO" id="GO:0016055">
    <property type="term" value="P:Wnt signaling pathway"/>
    <property type="evidence" value="ECO:0000315"/>
    <property type="project" value="MGI"/>
</dbReference>
<dbReference type="HAMAP" id="MF_03026">
    <property type="entry name" value="LZTS2"/>
    <property type="match status" value="1"/>
</dbReference>
<dbReference type="InterPro" id="IPR045329">
    <property type="entry name" value="LZTS"/>
</dbReference>
<dbReference type="InterPro" id="IPR028597">
    <property type="entry name" value="LZTS2"/>
</dbReference>
<dbReference type="PANTHER" id="PTHR19354">
    <property type="entry name" value="ZIPPER PUTATIVE TUMOR SUPPRESSOR 2 HOMOLOG-LIKE PROTEIN-RELATED"/>
    <property type="match status" value="1"/>
</dbReference>
<dbReference type="PANTHER" id="PTHR19354:SF4">
    <property type="entry name" value="ZIPPER PUTATIVE TUMOR SUPPRESSOR 2-RELATED"/>
    <property type="match status" value="1"/>
</dbReference>
<dbReference type="Pfam" id="PF06818">
    <property type="entry name" value="Fez1"/>
    <property type="match status" value="1"/>
</dbReference>
<keyword id="KW-0131">Cell cycle</keyword>
<keyword id="KW-0132">Cell division</keyword>
<keyword id="KW-0175">Coiled coil</keyword>
<keyword id="KW-0963">Cytoplasm</keyword>
<keyword id="KW-0206">Cytoskeleton</keyword>
<keyword id="KW-0493">Microtubule</keyword>
<keyword id="KW-0498">Mitosis</keyword>
<keyword id="KW-0597">Phosphoprotein</keyword>
<keyword id="KW-1185">Reference proteome</keyword>
<keyword id="KW-0879">Wnt signaling pathway</keyword>
<name>LZTS2_MOUSE</name>
<accession>Q91YU6</accession>
<accession>E9QKK6</accession>
<accession>Q569X6</accession>
<comment type="function">
    <text evidence="3">Negative regulator of katanin-mediated microtubule severing and release from the centrosome. Required for central spindle formation and the completion of cytokinesis. May negatively regulate axonal outgrowth by preventing the formation of microtubule bundles that are necessary for transport within the elongating axon. Negative regulator of the Wnt signaling pathway. Represses beta-catenin-mediated transcriptional activation by promoting the nuclear exclusion of beta-catenin.</text>
</comment>
<comment type="subunit">
    <text evidence="3">Interacts with KATNB1. Also interacts with CTNNB1, gamma-tubulin and KIF23.</text>
</comment>
<comment type="subcellular location">
    <subcellularLocation>
        <location evidence="3">Cytoplasm</location>
    </subcellularLocation>
    <subcellularLocation>
        <location evidence="3 5">Cytoplasm</location>
        <location evidence="3 5">Cytoskeleton</location>
        <location evidence="3 5">Microtubule organizing center</location>
        <location evidence="3 5">Centrosome</location>
    </subcellularLocation>
    <text evidence="3">Localized to the centrosome throughout the cell cycle. Localized to the midbody in cells undergoing cytokinesis.</text>
</comment>
<comment type="similarity">
    <text evidence="3">Belongs to the LZTS2 family.</text>
</comment>
<comment type="sequence caution" evidence="6">
    <conflict type="erroneous initiation">
        <sequence resource="EMBL-CDS" id="BAC98256"/>
    </conflict>
    <text>Truncated N-terminus.</text>
</comment>
<organism>
    <name type="scientific">Mus musculus</name>
    <name type="common">Mouse</name>
    <dbReference type="NCBI Taxonomy" id="10090"/>
    <lineage>
        <taxon>Eukaryota</taxon>
        <taxon>Metazoa</taxon>
        <taxon>Chordata</taxon>
        <taxon>Craniata</taxon>
        <taxon>Vertebrata</taxon>
        <taxon>Euteleostomi</taxon>
        <taxon>Mammalia</taxon>
        <taxon>Eutheria</taxon>
        <taxon>Euarchontoglires</taxon>
        <taxon>Glires</taxon>
        <taxon>Rodentia</taxon>
        <taxon>Myomorpha</taxon>
        <taxon>Muroidea</taxon>
        <taxon>Muridae</taxon>
        <taxon>Murinae</taxon>
        <taxon>Mus</taxon>
        <taxon>Mus</taxon>
    </lineage>
</organism>
<protein>
    <recommendedName>
        <fullName evidence="3">Leucine zipper putative tumor suppressor 2</fullName>
    </recommendedName>
    <alternativeName>
        <fullName evidence="3">Protein LAPSER1</fullName>
    </alternativeName>
</protein>
<feature type="chain" id="PRO_0000182975" description="Leucine zipper putative tumor suppressor 2">
    <location>
        <begin position="1"/>
        <end position="671"/>
    </location>
</feature>
<feature type="region of interest" description="Required for centrosomal localization" evidence="1">
    <location>
        <begin position="1"/>
        <end position="333"/>
    </location>
</feature>
<feature type="region of interest" description="Disordered" evidence="4">
    <location>
        <begin position="1"/>
        <end position="131"/>
    </location>
</feature>
<feature type="region of interest" description="Disordered" evidence="4">
    <location>
        <begin position="149"/>
        <end position="324"/>
    </location>
</feature>
<feature type="region of interest" description="Sufficient for interaction with CTNNB1" evidence="1">
    <location>
        <begin position="449"/>
        <end position="671"/>
    </location>
</feature>
<feature type="region of interest" description="Sufficient for interaction with KATNB1 and for inhibition of katanin-mediated microtubule severing" evidence="1">
    <location>
        <begin position="452"/>
        <end position="671"/>
    </location>
</feature>
<feature type="coiled-coil region" evidence="3">
    <location>
        <begin position="329"/>
        <end position="651"/>
    </location>
</feature>
<feature type="short sequence motif" description="Nuclear export signal" evidence="3">
    <location>
        <begin position="633"/>
        <end position="642"/>
    </location>
</feature>
<feature type="compositionally biased region" description="Low complexity" evidence="4">
    <location>
        <begin position="187"/>
        <end position="199"/>
    </location>
</feature>
<feature type="compositionally biased region" description="Polar residues" evidence="4">
    <location>
        <begin position="213"/>
        <end position="241"/>
    </location>
</feature>
<feature type="compositionally biased region" description="Low complexity" evidence="4">
    <location>
        <begin position="242"/>
        <end position="283"/>
    </location>
</feature>
<feature type="compositionally biased region" description="Gly residues" evidence="4">
    <location>
        <begin position="284"/>
        <end position="295"/>
    </location>
</feature>
<feature type="compositionally biased region" description="Low complexity" evidence="4">
    <location>
        <begin position="296"/>
        <end position="310"/>
    </location>
</feature>
<feature type="compositionally biased region" description="Pro residues" evidence="4">
    <location>
        <begin position="311"/>
        <end position="321"/>
    </location>
</feature>
<feature type="modified residue" description="Phosphoserine" evidence="7">
    <location>
        <position position="249"/>
    </location>
</feature>
<feature type="modified residue" description="Phosphoserine" evidence="7">
    <location>
        <position position="296"/>
    </location>
</feature>
<feature type="modified residue" description="Phosphoserine" evidence="2">
    <location>
        <position position="572"/>
    </location>
</feature>
<feature type="sequence conflict" description="In Ref. 1; BAC98256 and 3; AAH14695/AAH92263." evidence="6" ref="1 3">
    <original>P</original>
    <variation>R</variation>
    <location>
        <position position="64"/>
    </location>
</feature>
<feature type="sequence conflict" description="In Ref. 3; AAH14695/AAH92263." evidence="6" ref="3">
    <original>H</original>
    <variation>Q</variation>
    <location>
        <position position="327"/>
    </location>
</feature>
<reference key="1">
    <citation type="journal article" date="2003" name="DNA Res.">
        <title>Prediction of the coding sequences of mouse homologues of KIAA gene: III. The complete nucleotide sequences of 500 mouse KIAA-homologous cDNAs identified by screening of terminal sequences of cDNA clones randomly sampled from size-fractionated libraries.</title>
        <authorList>
            <person name="Okazaki N."/>
            <person name="Kikuno R."/>
            <person name="Ohara R."/>
            <person name="Inamoto S."/>
            <person name="Koseki H."/>
            <person name="Hiraoka S."/>
            <person name="Saga Y."/>
            <person name="Nagase T."/>
            <person name="Ohara O."/>
            <person name="Koga H."/>
        </authorList>
    </citation>
    <scope>NUCLEOTIDE SEQUENCE [LARGE SCALE MRNA]</scope>
    <source>
        <tissue>Embryonic tail</tissue>
    </source>
</reference>
<reference key="2">
    <citation type="journal article" date="2009" name="PLoS Biol.">
        <title>Lineage-specific biology revealed by a finished genome assembly of the mouse.</title>
        <authorList>
            <person name="Church D.M."/>
            <person name="Goodstadt L."/>
            <person name="Hillier L.W."/>
            <person name="Zody M.C."/>
            <person name="Goldstein S."/>
            <person name="She X."/>
            <person name="Bult C.J."/>
            <person name="Agarwala R."/>
            <person name="Cherry J.L."/>
            <person name="DiCuccio M."/>
            <person name="Hlavina W."/>
            <person name="Kapustin Y."/>
            <person name="Meric P."/>
            <person name="Maglott D."/>
            <person name="Birtle Z."/>
            <person name="Marques A.C."/>
            <person name="Graves T."/>
            <person name="Zhou S."/>
            <person name="Teague B."/>
            <person name="Potamousis K."/>
            <person name="Churas C."/>
            <person name="Place M."/>
            <person name="Herschleb J."/>
            <person name="Runnheim R."/>
            <person name="Forrest D."/>
            <person name="Amos-Landgraf J."/>
            <person name="Schwartz D.C."/>
            <person name="Cheng Z."/>
            <person name="Lindblad-Toh K."/>
            <person name="Eichler E.E."/>
            <person name="Ponting C.P."/>
        </authorList>
    </citation>
    <scope>NUCLEOTIDE SEQUENCE [LARGE SCALE GENOMIC DNA]</scope>
    <source>
        <strain>C57BL/6J</strain>
    </source>
</reference>
<reference key="3">
    <citation type="journal article" date="2004" name="Genome Res.">
        <title>The status, quality, and expansion of the NIH full-length cDNA project: the Mammalian Gene Collection (MGC).</title>
        <authorList>
            <consortium name="The MGC Project Team"/>
        </authorList>
    </citation>
    <scope>NUCLEOTIDE SEQUENCE [LARGE SCALE MRNA]</scope>
    <source>
        <strain>NMRI</strain>
        <tissue>Mammary tumor</tissue>
    </source>
</reference>
<reference key="4">
    <citation type="journal article" date="2008" name="Hum. Mol. Genet.">
        <title>LAPSER1/LZTS2: a pluripotent tumor suppressor linked to the inhibition of katanin-mediated microtubule severing.</title>
        <authorList>
            <person name="Sudo H."/>
            <person name="Maru Y."/>
        </authorList>
    </citation>
    <scope>SUBCELLULAR LOCATION</scope>
</reference>
<reference key="5">
    <citation type="journal article" date="2010" name="Cell">
        <title>A tissue-specific atlas of mouse protein phosphorylation and expression.</title>
        <authorList>
            <person name="Huttlin E.L."/>
            <person name="Jedrychowski M.P."/>
            <person name="Elias J.E."/>
            <person name="Goswami T."/>
            <person name="Rad R."/>
            <person name="Beausoleil S.A."/>
            <person name="Villen J."/>
            <person name="Haas W."/>
            <person name="Sowa M.E."/>
            <person name="Gygi S.P."/>
        </authorList>
    </citation>
    <scope>PHOSPHORYLATION [LARGE SCALE ANALYSIS] AT SER-249 AND SER-296</scope>
    <scope>IDENTIFICATION BY MASS SPECTROMETRY [LARGE SCALE ANALYSIS]</scope>
    <source>
        <tissue>Kidney</tissue>
    </source>
</reference>
<gene>
    <name type="primary">Lzts2</name>
    <name type="synonym">Kiaa1813</name>
    <name type="synonym">Lapser1</name>
</gene>